<reference key="1">
    <citation type="journal article" date="2008" name="J. Bacteriol.">
        <title>Genome sequence of Thermofilum pendens reveals an exceptional loss of biosynthetic pathways without genome reduction.</title>
        <authorList>
            <person name="Anderson I."/>
            <person name="Rodriguez J."/>
            <person name="Susanti D."/>
            <person name="Porat I."/>
            <person name="Reich C."/>
            <person name="Ulrich L.E."/>
            <person name="Elkins J.G."/>
            <person name="Mavromatis K."/>
            <person name="Lykidis A."/>
            <person name="Kim E."/>
            <person name="Thompson L.S."/>
            <person name="Nolan M."/>
            <person name="Land M."/>
            <person name="Copeland A."/>
            <person name="Lapidus A."/>
            <person name="Lucas S."/>
            <person name="Detter C."/>
            <person name="Zhulin I.B."/>
            <person name="Olsen G.J."/>
            <person name="Whitman W."/>
            <person name="Mukhopadhyay B."/>
            <person name="Bristow J."/>
            <person name="Kyrpides N."/>
        </authorList>
    </citation>
    <scope>NUCLEOTIDE SEQUENCE [LARGE SCALE GENOMIC DNA]</scope>
    <source>
        <strain>DSM 2475 / Hrk 5</strain>
    </source>
</reference>
<comment type="subunit">
    <text evidence="1">Part of the 30S ribosomal subunit.</text>
</comment>
<comment type="similarity">
    <text evidence="1">Belongs to the universal ribosomal protein uS15 family.</text>
</comment>
<evidence type="ECO:0000255" key="1">
    <source>
        <dbReference type="HAMAP-Rule" id="MF_01343"/>
    </source>
</evidence>
<evidence type="ECO:0000256" key="2">
    <source>
        <dbReference type="SAM" id="MobiDB-lite"/>
    </source>
</evidence>
<evidence type="ECO:0000305" key="3"/>
<dbReference type="EMBL" id="CP000505">
    <property type="protein sequence ID" value="ABL77921.1"/>
    <property type="molecule type" value="Genomic_DNA"/>
</dbReference>
<dbReference type="RefSeq" id="WP_011752186.1">
    <property type="nucleotide sequence ID" value="NC_008698.1"/>
</dbReference>
<dbReference type="SMR" id="A1RXJ1"/>
<dbReference type="STRING" id="368408.Tpen_0515"/>
<dbReference type="EnsemblBacteria" id="ABL77921">
    <property type="protein sequence ID" value="ABL77921"/>
    <property type="gene ID" value="Tpen_0515"/>
</dbReference>
<dbReference type="GeneID" id="4601353"/>
<dbReference type="KEGG" id="tpe:Tpen_0515"/>
<dbReference type="eggNOG" id="arCOG04185">
    <property type="taxonomic scope" value="Archaea"/>
</dbReference>
<dbReference type="HOGENOM" id="CLU_090139_2_0_2"/>
<dbReference type="OrthoDB" id="6533at2157"/>
<dbReference type="Proteomes" id="UP000000641">
    <property type="component" value="Chromosome"/>
</dbReference>
<dbReference type="GO" id="GO:0022627">
    <property type="term" value="C:cytosolic small ribosomal subunit"/>
    <property type="evidence" value="ECO:0007669"/>
    <property type="project" value="TreeGrafter"/>
</dbReference>
<dbReference type="GO" id="GO:0070181">
    <property type="term" value="F:small ribosomal subunit rRNA binding"/>
    <property type="evidence" value="ECO:0007669"/>
    <property type="project" value="TreeGrafter"/>
</dbReference>
<dbReference type="GO" id="GO:0003735">
    <property type="term" value="F:structural constituent of ribosome"/>
    <property type="evidence" value="ECO:0007669"/>
    <property type="project" value="InterPro"/>
</dbReference>
<dbReference type="GO" id="GO:0006412">
    <property type="term" value="P:translation"/>
    <property type="evidence" value="ECO:0007669"/>
    <property type="project" value="UniProtKB-UniRule"/>
</dbReference>
<dbReference type="CDD" id="cd00353">
    <property type="entry name" value="Ribosomal_S15p_S13e"/>
    <property type="match status" value="1"/>
</dbReference>
<dbReference type="FunFam" id="1.10.287.10:FF:000003">
    <property type="entry name" value="40S ribosomal protein S13"/>
    <property type="match status" value="1"/>
</dbReference>
<dbReference type="FunFam" id="4.10.860.130:FF:000001">
    <property type="entry name" value="40S ribosomal protein S13"/>
    <property type="match status" value="1"/>
</dbReference>
<dbReference type="Gene3D" id="4.10.860.130">
    <property type="match status" value="1"/>
</dbReference>
<dbReference type="Gene3D" id="1.10.287.10">
    <property type="entry name" value="S15/NS1, RNA-binding"/>
    <property type="match status" value="1"/>
</dbReference>
<dbReference type="HAMAP" id="MF_01343_A">
    <property type="entry name" value="Ribosomal_uS15_A"/>
    <property type="match status" value="1"/>
</dbReference>
<dbReference type="InterPro" id="IPR000589">
    <property type="entry name" value="Ribosomal_uS15"/>
</dbReference>
<dbReference type="InterPro" id="IPR023029">
    <property type="entry name" value="Ribosomal_uS15_arc_euk"/>
</dbReference>
<dbReference type="InterPro" id="IPR012606">
    <property type="entry name" value="Ribosomal_uS15_N"/>
</dbReference>
<dbReference type="InterPro" id="IPR009068">
    <property type="entry name" value="uS15_NS1_RNA-bd_sf"/>
</dbReference>
<dbReference type="NCBIfam" id="NF006331">
    <property type="entry name" value="PRK08561.1"/>
    <property type="match status" value="1"/>
</dbReference>
<dbReference type="PANTHER" id="PTHR11885">
    <property type="entry name" value="RIBOSOMAL PROTEIN S15P/S13E"/>
    <property type="match status" value="1"/>
</dbReference>
<dbReference type="PANTHER" id="PTHR11885:SF6">
    <property type="entry name" value="SMALL RIBOSOMAL SUBUNIT PROTEIN US15"/>
    <property type="match status" value="1"/>
</dbReference>
<dbReference type="Pfam" id="PF08069">
    <property type="entry name" value="Ribosomal_S13_N"/>
    <property type="match status" value="1"/>
</dbReference>
<dbReference type="Pfam" id="PF00312">
    <property type="entry name" value="Ribosomal_S15"/>
    <property type="match status" value="1"/>
</dbReference>
<dbReference type="SMART" id="SM01386">
    <property type="entry name" value="Ribosomal_S13_N"/>
    <property type="match status" value="1"/>
</dbReference>
<dbReference type="SMART" id="SM01387">
    <property type="entry name" value="Ribosomal_S15"/>
    <property type="match status" value="1"/>
</dbReference>
<dbReference type="SUPFAM" id="SSF47060">
    <property type="entry name" value="S15/NS1 RNA-binding domain"/>
    <property type="match status" value="1"/>
</dbReference>
<dbReference type="PROSITE" id="PS00362">
    <property type="entry name" value="RIBOSOMAL_S15"/>
    <property type="match status" value="1"/>
</dbReference>
<gene>
    <name evidence="1" type="primary">rps15</name>
    <name type="ordered locus">Tpen_0515</name>
</gene>
<feature type="chain" id="PRO_0000354232" description="Small ribosomal subunit protein uS15">
    <location>
        <begin position="1"/>
        <end position="148"/>
    </location>
</feature>
<feature type="region of interest" description="Disordered" evidence="2">
    <location>
        <begin position="1"/>
        <end position="23"/>
    </location>
</feature>
<accession>A1RXJ1</accession>
<organism>
    <name type="scientific">Thermofilum pendens (strain DSM 2475 / Hrk 5)</name>
    <dbReference type="NCBI Taxonomy" id="368408"/>
    <lineage>
        <taxon>Archaea</taxon>
        <taxon>Thermoproteota</taxon>
        <taxon>Thermoprotei</taxon>
        <taxon>Thermofilales</taxon>
        <taxon>Thermofilaceae</taxon>
        <taxon>Thermofilum</taxon>
    </lineage>
</organism>
<proteinExistence type="inferred from homology"/>
<keyword id="KW-1185">Reference proteome</keyword>
<keyword id="KW-0687">Ribonucleoprotein</keyword>
<keyword id="KW-0689">Ribosomal protein</keyword>
<sequence length="148" mass="17388">MRKSKEKGRSGSTRPPQLKKPEWVKMRPEEVEELVVSLYRKGYPPSMIGVILRDQYGIPMVKAVTGKSVLQILRERGLAPEIPEDLMNLMKRAIRVRKHLEEHPKDYHSKRGLQLIESKIHRLVKYYKREGILPPDWKYEPSKIALYT</sequence>
<name>RS15_THEPD</name>
<protein>
    <recommendedName>
        <fullName evidence="1">Small ribosomal subunit protein uS15</fullName>
    </recommendedName>
    <alternativeName>
        <fullName evidence="3">30S ribosomal protein S15</fullName>
    </alternativeName>
</protein>